<gene>
    <name type="primary">tmem236</name>
    <name type="ORF">si:dkey-32m20.1</name>
</gene>
<sequence length="350" mass="39208">MLSGKTVKLIVFELLQFACLCIPVFVVMERFASVIRFVKSSDTAYWLVVAASVAYAASVTLFVWVPLKYFMLKTQRFSEVTNWRPVTLAYVILSTLPCFAIIIASSKVQADAAIRFDRLTELPVSLVLFSLICVDIVERIRPLRLTGKASGLDLDLEMPGPVLTHLEQVTSISGHLQANGQDGDASFRSPVSNGSLSGRWEDARTYGLPRTSSSAYLYSHSHSGPFSFLWKRDPRHDLFVSSFMFWLDTVEMVRVAGTNSVFYSGWVFPIYILAYLSLLRVVITPDSPLLALSSILSQDLPFLVVRICLLAVFGYVTPVLYILKNILASISFVYFVFMTKLKLLNRGSMF</sequence>
<comment type="subcellular location">
    <subcellularLocation>
        <location evidence="2">Membrane</location>
        <topology evidence="2">Multi-pass membrane protein</topology>
    </subcellularLocation>
</comment>
<comment type="similarity">
    <text evidence="2">Belongs to the TMEM236 family.</text>
</comment>
<protein>
    <recommendedName>
        <fullName>Transmembrane protein 236</fullName>
    </recommendedName>
</protein>
<reference key="1">
    <citation type="journal article" date="2013" name="Nature">
        <title>The zebrafish reference genome sequence and its relationship to the human genome.</title>
        <authorList>
            <person name="Howe K."/>
            <person name="Clark M.D."/>
            <person name="Torroja C.F."/>
            <person name="Torrance J."/>
            <person name="Berthelot C."/>
            <person name="Muffato M."/>
            <person name="Collins J.E."/>
            <person name="Humphray S."/>
            <person name="McLaren K."/>
            <person name="Matthews L."/>
            <person name="McLaren S."/>
            <person name="Sealy I."/>
            <person name="Caccamo M."/>
            <person name="Churcher C."/>
            <person name="Scott C."/>
            <person name="Barrett J.C."/>
            <person name="Koch R."/>
            <person name="Rauch G.J."/>
            <person name="White S."/>
            <person name="Chow W."/>
            <person name="Kilian B."/>
            <person name="Quintais L.T."/>
            <person name="Guerra-Assuncao J.A."/>
            <person name="Zhou Y."/>
            <person name="Gu Y."/>
            <person name="Yen J."/>
            <person name="Vogel J.H."/>
            <person name="Eyre T."/>
            <person name="Redmond S."/>
            <person name="Banerjee R."/>
            <person name="Chi J."/>
            <person name="Fu B."/>
            <person name="Langley E."/>
            <person name="Maguire S.F."/>
            <person name="Laird G.K."/>
            <person name="Lloyd D."/>
            <person name="Kenyon E."/>
            <person name="Donaldson S."/>
            <person name="Sehra H."/>
            <person name="Almeida-King J."/>
            <person name="Loveland J."/>
            <person name="Trevanion S."/>
            <person name="Jones M."/>
            <person name="Quail M."/>
            <person name="Willey D."/>
            <person name="Hunt A."/>
            <person name="Burton J."/>
            <person name="Sims S."/>
            <person name="McLay K."/>
            <person name="Plumb B."/>
            <person name="Davis J."/>
            <person name="Clee C."/>
            <person name="Oliver K."/>
            <person name="Clark R."/>
            <person name="Riddle C."/>
            <person name="Elliot D."/>
            <person name="Threadgold G."/>
            <person name="Harden G."/>
            <person name="Ware D."/>
            <person name="Begum S."/>
            <person name="Mortimore B."/>
            <person name="Kerry G."/>
            <person name="Heath P."/>
            <person name="Phillimore B."/>
            <person name="Tracey A."/>
            <person name="Corby N."/>
            <person name="Dunn M."/>
            <person name="Johnson C."/>
            <person name="Wood J."/>
            <person name="Clark S."/>
            <person name="Pelan S."/>
            <person name="Griffiths G."/>
            <person name="Smith M."/>
            <person name="Glithero R."/>
            <person name="Howden P."/>
            <person name="Barker N."/>
            <person name="Lloyd C."/>
            <person name="Stevens C."/>
            <person name="Harley J."/>
            <person name="Holt K."/>
            <person name="Panagiotidis G."/>
            <person name="Lovell J."/>
            <person name="Beasley H."/>
            <person name="Henderson C."/>
            <person name="Gordon D."/>
            <person name="Auger K."/>
            <person name="Wright D."/>
            <person name="Collins J."/>
            <person name="Raisen C."/>
            <person name="Dyer L."/>
            <person name="Leung K."/>
            <person name="Robertson L."/>
            <person name="Ambridge K."/>
            <person name="Leongamornlert D."/>
            <person name="McGuire S."/>
            <person name="Gilderthorp R."/>
            <person name="Griffiths C."/>
            <person name="Manthravadi D."/>
            <person name="Nichol S."/>
            <person name="Barker G."/>
            <person name="Whitehead S."/>
            <person name="Kay M."/>
            <person name="Brown J."/>
            <person name="Murnane C."/>
            <person name="Gray E."/>
            <person name="Humphries M."/>
            <person name="Sycamore N."/>
            <person name="Barker D."/>
            <person name="Saunders D."/>
            <person name="Wallis J."/>
            <person name="Babbage A."/>
            <person name="Hammond S."/>
            <person name="Mashreghi-Mohammadi M."/>
            <person name="Barr L."/>
            <person name="Martin S."/>
            <person name="Wray P."/>
            <person name="Ellington A."/>
            <person name="Matthews N."/>
            <person name="Ellwood M."/>
            <person name="Woodmansey R."/>
            <person name="Clark G."/>
            <person name="Cooper J."/>
            <person name="Tromans A."/>
            <person name="Grafham D."/>
            <person name="Skuce C."/>
            <person name="Pandian R."/>
            <person name="Andrews R."/>
            <person name="Harrison E."/>
            <person name="Kimberley A."/>
            <person name="Garnett J."/>
            <person name="Fosker N."/>
            <person name="Hall R."/>
            <person name="Garner P."/>
            <person name="Kelly D."/>
            <person name="Bird C."/>
            <person name="Palmer S."/>
            <person name="Gehring I."/>
            <person name="Berger A."/>
            <person name="Dooley C.M."/>
            <person name="Ersan-Urun Z."/>
            <person name="Eser C."/>
            <person name="Geiger H."/>
            <person name="Geisler M."/>
            <person name="Karotki L."/>
            <person name="Kirn A."/>
            <person name="Konantz J."/>
            <person name="Konantz M."/>
            <person name="Oberlander M."/>
            <person name="Rudolph-Geiger S."/>
            <person name="Teucke M."/>
            <person name="Lanz C."/>
            <person name="Raddatz G."/>
            <person name="Osoegawa K."/>
            <person name="Zhu B."/>
            <person name="Rapp A."/>
            <person name="Widaa S."/>
            <person name="Langford C."/>
            <person name="Yang F."/>
            <person name="Schuster S.C."/>
            <person name="Carter N.P."/>
            <person name="Harrow J."/>
            <person name="Ning Z."/>
            <person name="Herrero J."/>
            <person name="Searle S.M."/>
            <person name="Enright A."/>
            <person name="Geisler R."/>
            <person name="Plasterk R.H."/>
            <person name="Lee C."/>
            <person name="Westerfield M."/>
            <person name="de Jong P.J."/>
            <person name="Zon L.I."/>
            <person name="Postlethwait J.H."/>
            <person name="Nusslein-Volhard C."/>
            <person name="Hubbard T.J."/>
            <person name="Roest Crollius H."/>
            <person name="Rogers J."/>
            <person name="Stemple D.L."/>
        </authorList>
    </citation>
    <scope>NUCLEOTIDE SEQUENCE [LARGE SCALE GENOMIC DNA]</scope>
    <source>
        <strain>Tuebingen</strain>
    </source>
</reference>
<name>TM236_DANRE</name>
<evidence type="ECO:0000255" key="1"/>
<evidence type="ECO:0000305" key="2"/>
<organism>
    <name type="scientific">Danio rerio</name>
    <name type="common">Zebrafish</name>
    <name type="synonym">Brachydanio rerio</name>
    <dbReference type="NCBI Taxonomy" id="7955"/>
    <lineage>
        <taxon>Eukaryota</taxon>
        <taxon>Metazoa</taxon>
        <taxon>Chordata</taxon>
        <taxon>Craniata</taxon>
        <taxon>Vertebrata</taxon>
        <taxon>Euteleostomi</taxon>
        <taxon>Actinopterygii</taxon>
        <taxon>Neopterygii</taxon>
        <taxon>Teleostei</taxon>
        <taxon>Ostariophysi</taxon>
        <taxon>Cypriniformes</taxon>
        <taxon>Danionidae</taxon>
        <taxon>Danioninae</taxon>
        <taxon>Danio</taxon>
    </lineage>
</organism>
<keyword id="KW-0472">Membrane</keyword>
<keyword id="KW-1185">Reference proteome</keyword>
<keyword id="KW-0812">Transmembrane</keyword>
<keyword id="KW-1133">Transmembrane helix</keyword>
<accession>A5WVU6</accession>
<proteinExistence type="inferred from homology"/>
<feature type="chain" id="PRO_0000409539" description="Transmembrane protein 236">
    <location>
        <begin position="1"/>
        <end position="350"/>
    </location>
</feature>
<feature type="transmembrane region" description="Helical" evidence="1">
    <location>
        <begin position="9"/>
        <end position="29"/>
    </location>
</feature>
<feature type="transmembrane region" description="Helical" evidence="1">
    <location>
        <begin position="47"/>
        <end position="67"/>
    </location>
</feature>
<feature type="transmembrane region" description="Helical" evidence="1">
    <location>
        <begin position="85"/>
        <end position="105"/>
    </location>
</feature>
<feature type="transmembrane region" description="Helical" evidence="1">
    <location>
        <begin position="120"/>
        <end position="140"/>
    </location>
</feature>
<feature type="transmembrane region" description="Helical" evidence="1">
    <location>
        <begin position="259"/>
        <end position="279"/>
    </location>
</feature>
<feature type="transmembrane region" description="Helical" evidence="1">
    <location>
        <begin position="302"/>
        <end position="322"/>
    </location>
</feature>
<feature type="transmembrane region" description="Helical" evidence="1">
    <location>
        <begin position="325"/>
        <end position="345"/>
    </location>
</feature>
<dbReference type="EMBL" id="CT027716">
    <property type="protein sequence ID" value="CAN88071.1"/>
    <property type="molecule type" value="Genomic_DNA"/>
</dbReference>
<dbReference type="RefSeq" id="NP_001093549.1">
    <property type="nucleotide sequence ID" value="NM_001100079.1"/>
</dbReference>
<dbReference type="RefSeq" id="XP_068078422.1">
    <property type="nucleotide sequence ID" value="XM_068222321.1"/>
</dbReference>
<dbReference type="FunCoup" id="A5WVU6">
    <property type="interactions" value="556"/>
</dbReference>
<dbReference type="STRING" id="7955.ENSDARP00000116369"/>
<dbReference type="PaxDb" id="7955-ENSDARP00000101648"/>
<dbReference type="Ensembl" id="ENSDART00000136360">
    <property type="protein sequence ID" value="ENSDARP00000116369"/>
    <property type="gene ID" value="ENSDARG00000075715"/>
</dbReference>
<dbReference type="GeneID" id="100002496"/>
<dbReference type="KEGG" id="dre:100002496"/>
<dbReference type="AGR" id="ZFIN:ZDB-GENE-070705-455"/>
<dbReference type="CTD" id="653567"/>
<dbReference type="ZFIN" id="ZDB-GENE-070705-455">
    <property type="gene designation" value="tmem236"/>
</dbReference>
<dbReference type="eggNOG" id="ENOG502QVFM">
    <property type="taxonomic scope" value="Eukaryota"/>
</dbReference>
<dbReference type="HOGENOM" id="CLU_072609_0_0_1"/>
<dbReference type="InParanoid" id="A5WVU6"/>
<dbReference type="OMA" id="CTFPCFA"/>
<dbReference type="OrthoDB" id="6286514at2759"/>
<dbReference type="PhylomeDB" id="A5WVU6"/>
<dbReference type="PRO" id="PR:A5WVU6"/>
<dbReference type="Proteomes" id="UP000000437">
    <property type="component" value="Chromosome 2"/>
</dbReference>
<dbReference type="Bgee" id="ENSDARG00000075715">
    <property type="expression patterns" value="Expressed in intestine and 5 other cell types or tissues"/>
</dbReference>
<dbReference type="GO" id="GO:0016020">
    <property type="term" value="C:membrane"/>
    <property type="evidence" value="ECO:0007669"/>
    <property type="project" value="UniProtKB-SubCell"/>
</dbReference>
<dbReference type="InterPro" id="IPR020394">
    <property type="entry name" value="Uncharacterised_FAM23-like_TM"/>
</dbReference>
<dbReference type="PANTHER" id="PTHR31453">
    <property type="entry name" value="TRANSMEMBRANE PROTEIN 236"/>
    <property type="match status" value="1"/>
</dbReference>
<dbReference type="PANTHER" id="PTHR31453:SF2">
    <property type="entry name" value="TRANSMEMBRANE PROTEIN 236"/>
    <property type="match status" value="1"/>
</dbReference>